<accession>Q5LHW2</accession>
<reference key="1">
    <citation type="journal article" date="2005" name="Science">
        <title>Extensive DNA inversions in the B. fragilis genome control variable gene expression.</title>
        <authorList>
            <person name="Cerdeno-Tarraga A.-M."/>
            <person name="Patrick S."/>
            <person name="Crossman L.C."/>
            <person name="Blakely G."/>
            <person name="Abratt V."/>
            <person name="Lennard N."/>
            <person name="Poxton I."/>
            <person name="Duerden B."/>
            <person name="Harris B."/>
            <person name="Quail M.A."/>
            <person name="Barron A."/>
            <person name="Clark L."/>
            <person name="Corton C."/>
            <person name="Doggett J."/>
            <person name="Holden M.T.G."/>
            <person name="Larke N."/>
            <person name="Line A."/>
            <person name="Lord A."/>
            <person name="Norbertczak H."/>
            <person name="Ormond D."/>
            <person name="Price C."/>
            <person name="Rabbinowitsch E."/>
            <person name="Woodward J."/>
            <person name="Barrell B.G."/>
            <person name="Parkhill J."/>
        </authorList>
    </citation>
    <scope>NUCLEOTIDE SEQUENCE [LARGE SCALE GENOMIC DNA]</scope>
    <source>
        <strain>ATCC 25285 / DSM 2151 / CCUG 4856 / JCM 11019 / LMG 10263 / NCTC 9343 / Onslow / VPI 2553 / EN-2</strain>
    </source>
</reference>
<protein>
    <recommendedName>
        <fullName evidence="1">Large ribosomal subunit protein bL19</fullName>
    </recommendedName>
    <alternativeName>
        <fullName evidence="2">50S ribosomal protein L19</fullName>
    </alternativeName>
</protein>
<proteinExistence type="inferred from homology"/>
<organism>
    <name type="scientific">Bacteroides fragilis (strain ATCC 25285 / DSM 2151 / CCUG 4856 / JCM 11019 / LMG 10263 / NCTC 9343 / Onslow / VPI 2553 / EN-2)</name>
    <dbReference type="NCBI Taxonomy" id="272559"/>
    <lineage>
        <taxon>Bacteria</taxon>
        <taxon>Pseudomonadati</taxon>
        <taxon>Bacteroidota</taxon>
        <taxon>Bacteroidia</taxon>
        <taxon>Bacteroidales</taxon>
        <taxon>Bacteroidaceae</taxon>
        <taxon>Bacteroides</taxon>
    </lineage>
</organism>
<keyword id="KW-0687">Ribonucleoprotein</keyword>
<keyword id="KW-0689">Ribosomal protein</keyword>
<comment type="function">
    <text evidence="1">This protein is located at the 30S-50S ribosomal subunit interface and may play a role in the structure and function of the aminoacyl-tRNA binding site.</text>
</comment>
<comment type="similarity">
    <text evidence="1">Belongs to the bacterial ribosomal protein bL19 family.</text>
</comment>
<feature type="chain" id="PRO_0000226830" description="Large ribosomal subunit protein bL19">
    <location>
        <begin position="1"/>
        <end position="117"/>
    </location>
</feature>
<name>RL19_BACFN</name>
<sequence>MDLIKIAEEAFATGKQHPSFKAGDTVTVAYRIIEGNKERVQLYRGVVIKIAGHGEKKRFTVRKMSGTVGVERIFPIESPAIDSIEVNKVGKVRRAKLYYLRALTGKKARIKEKRVNG</sequence>
<dbReference type="EMBL" id="CR626927">
    <property type="protein sequence ID" value="CAH06268.1"/>
    <property type="molecule type" value="Genomic_DNA"/>
</dbReference>
<dbReference type="RefSeq" id="WP_005778830.1">
    <property type="nucleotide sequence ID" value="NZ_UFTH01000001.1"/>
</dbReference>
<dbReference type="SMR" id="Q5LHW2"/>
<dbReference type="PaxDb" id="272559-BF9343_0489"/>
<dbReference type="GeneID" id="93106135"/>
<dbReference type="KEGG" id="bfs:BF9343_0489"/>
<dbReference type="eggNOG" id="COG0335">
    <property type="taxonomic scope" value="Bacteria"/>
</dbReference>
<dbReference type="HOGENOM" id="CLU_103507_2_2_10"/>
<dbReference type="Proteomes" id="UP000006731">
    <property type="component" value="Chromosome"/>
</dbReference>
<dbReference type="GO" id="GO:0022625">
    <property type="term" value="C:cytosolic large ribosomal subunit"/>
    <property type="evidence" value="ECO:0007669"/>
    <property type="project" value="TreeGrafter"/>
</dbReference>
<dbReference type="GO" id="GO:0003735">
    <property type="term" value="F:structural constituent of ribosome"/>
    <property type="evidence" value="ECO:0007669"/>
    <property type="project" value="InterPro"/>
</dbReference>
<dbReference type="GO" id="GO:0006412">
    <property type="term" value="P:translation"/>
    <property type="evidence" value="ECO:0007669"/>
    <property type="project" value="UniProtKB-UniRule"/>
</dbReference>
<dbReference type="FunFam" id="2.30.30.790:FF:000001">
    <property type="entry name" value="50S ribosomal protein L19"/>
    <property type="match status" value="1"/>
</dbReference>
<dbReference type="Gene3D" id="2.30.30.790">
    <property type="match status" value="1"/>
</dbReference>
<dbReference type="HAMAP" id="MF_00402">
    <property type="entry name" value="Ribosomal_bL19"/>
    <property type="match status" value="1"/>
</dbReference>
<dbReference type="InterPro" id="IPR001857">
    <property type="entry name" value="Ribosomal_bL19"/>
</dbReference>
<dbReference type="InterPro" id="IPR018257">
    <property type="entry name" value="Ribosomal_bL19_CS"/>
</dbReference>
<dbReference type="InterPro" id="IPR038657">
    <property type="entry name" value="Ribosomal_bL19_sf"/>
</dbReference>
<dbReference type="InterPro" id="IPR008991">
    <property type="entry name" value="Translation_prot_SH3-like_sf"/>
</dbReference>
<dbReference type="NCBIfam" id="TIGR01024">
    <property type="entry name" value="rplS_bact"/>
    <property type="match status" value="1"/>
</dbReference>
<dbReference type="PANTHER" id="PTHR15680:SF9">
    <property type="entry name" value="LARGE RIBOSOMAL SUBUNIT PROTEIN BL19M"/>
    <property type="match status" value="1"/>
</dbReference>
<dbReference type="PANTHER" id="PTHR15680">
    <property type="entry name" value="RIBOSOMAL PROTEIN L19"/>
    <property type="match status" value="1"/>
</dbReference>
<dbReference type="Pfam" id="PF01245">
    <property type="entry name" value="Ribosomal_L19"/>
    <property type="match status" value="1"/>
</dbReference>
<dbReference type="PIRSF" id="PIRSF002191">
    <property type="entry name" value="Ribosomal_L19"/>
    <property type="match status" value="1"/>
</dbReference>
<dbReference type="PRINTS" id="PR00061">
    <property type="entry name" value="RIBOSOMALL19"/>
</dbReference>
<dbReference type="SUPFAM" id="SSF50104">
    <property type="entry name" value="Translation proteins SH3-like domain"/>
    <property type="match status" value="1"/>
</dbReference>
<dbReference type="PROSITE" id="PS01015">
    <property type="entry name" value="RIBOSOMAL_L19"/>
    <property type="match status" value="1"/>
</dbReference>
<gene>
    <name evidence="1" type="primary">rplS</name>
    <name type="ordered locus">BF0513</name>
</gene>
<evidence type="ECO:0000255" key="1">
    <source>
        <dbReference type="HAMAP-Rule" id="MF_00402"/>
    </source>
</evidence>
<evidence type="ECO:0000305" key="2"/>